<organism>
    <name type="scientific">Bacillus subtilis (strain 168)</name>
    <dbReference type="NCBI Taxonomy" id="224308"/>
    <lineage>
        <taxon>Bacteria</taxon>
        <taxon>Bacillati</taxon>
        <taxon>Bacillota</taxon>
        <taxon>Bacilli</taxon>
        <taxon>Bacillales</taxon>
        <taxon>Bacillaceae</taxon>
        <taxon>Bacillus</taxon>
    </lineage>
</organism>
<reference key="1">
    <citation type="journal article" date="1986" name="Nucleic Acids Res.">
        <title>Structure of a Bacillus subtilis endo-beta-1,4-glucanase gene.</title>
        <authorList>
            <person name="Mackay R.M."/>
            <person name="Lo A."/>
            <person name="Willick G."/>
            <person name="Zuker M."/>
            <person name="Baird S."/>
            <person name="Dove M."/>
            <person name="Moranelli F."/>
            <person name="Seligy V."/>
        </authorList>
    </citation>
    <scope>NUCLEOTIDE SEQUENCE [GENOMIC DNA]</scope>
    <source>
        <strain>PAP115</strain>
    </source>
</reference>
<reference key="2">
    <citation type="journal article" date="1994" name="Antonie Van Leeuwenhoek">
        <title>Nucleotide sequence of an endo-beta-1,4-glucanase gene from Bacillus subtilis CK-2.</title>
        <authorList>
            <person name="Lindahl V."/>
            <person name="Aa K."/>
            <person name="Tronsmo A."/>
        </authorList>
    </citation>
    <scope>NUCLEOTIDE SEQUENCE [GENOMIC DNA]</scope>
    <source>
        <strain>CK-2</strain>
    </source>
</reference>
<reference key="3">
    <citation type="journal article" date="1996" name="Microbiology">
        <title>New genes in the 170 degrees region of the Bacillus subtilis genome encode DNA gyrase subunits, a thioredoxin, a xylanase and an amino acid transporter.</title>
        <authorList>
            <person name="Rose M."/>
            <person name="Entian K.-D."/>
        </authorList>
    </citation>
    <scope>NUCLEOTIDE SEQUENCE [GENOMIC DNA]</scope>
    <source>
        <strain>168</strain>
    </source>
</reference>
<reference key="4">
    <citation type="journal article" date="1997" name="Nature">
        <title>The complete genome sequence of the Gram-positive bacterium Bacillus subtilis.</title>
        <authorList>
            <person name="Kunst F."/>
            <person name="Ogasawara N."/>
            <person name="Moszer I."/>
            <person name="Albertini A.M."/>
            <person name="Alloni G."/>
            <person name="Azevedo V."/>
            <person name="Bertero M.G."/>
            <person name="Bessieres P."/>
            <person name="Bolotin A."/>
            <person name="Borchert S."/>
            <person name="Borriss R."/>
            <person name="Boursier L."/>
            <person name="Brans A."/>
            <person name="Braun M."/>
            <person name="Brignell S.C."/>
            <person name="Bron S."/>
            <person name="Brouillet S."/>
            <person name="Bruschi C.V."/>
            <person name="Caldwell B."/>
            <person name="Capuano V."/>
            <person name="Carter N.M."/>
            <person name="Choi S.-K."/>
            <person name="Codani J.-J."/>
            <person name="Connerton I.F."/>
            <person name="Cummings N.J."/>
            <person name="Daniel R.A."/>
            <person name="Denizot F."/>
            <person name="Devine K.M."/>
            <person name="Duesterhoeft A."/>
            <person name="Ehrlich S.D."/>
            <person name="Emmerson P.T."/>
            <person name="Entian K.-D."/>
            <person name="Errington J."/>
            <person name="Fabret C."/>
            <person name="Ferrari E."/>
            <person name="Foulger D."/>
            <person name="Fritz C."/>
            <person name="Fujita M."/>
            <person name="Fujita Y."/>
            <person name="Fuma S."/>
            <person name="Galizzi A."/>
            <person name="Galleron N."/>
            <person name="Ghim S.-Y."/>
            <person name="Glaser P."/>
            <person name="Goffeau A."/>
            <person name="Golightly E.J."/>
            <person name="Grandi G."/>
            <person name="Guiseppi G."/>
            <person name="Guy B.J."/>
            <person name="Haga K."/>
            <person name="Haiech J."/>
            <person name="Harwood C.R."/>
            <person name="Henaut A."/>
            <person name="Hilbert H."/>
            <person name="Holsappel S."/>
            <person name="Hosono S."/>
            <person name="Hullo M.-F."/>
            <person name="Itaya M."/>
            <person name="Jones L.-M."/>
            <person name="Joris B."/>
            <person name="Karamata D."/>
            <person name="Kasahara Y."/>
            <person name="Klaerr-Blanchard M."/>
            <person name="Klein C."/>
            <person name="Kobayashi Y."/>
            <person name="Koetter P."/>
            <person name="Koningstein G."/>
            <person name="Krogh S."/>
            <person name="Kumano M."/>
            <person name="Kurita K."/>
            <person name="Lapidus A."/>
            <person name="Lardinois S."/>
            <person name="Lauber J."/>
            <person name="Lazarevic V."/>
            <person name="Lee S.-M."/>
            <person name="Levine A."/>
            <person name="Liu H."/>
            <person name="Masuda S."/>
            <person name="Mauel C."/>
            <person name="Medigue C."/>
            <person name="Medina N."/>
            <person name="Mellado R.P."/>
            <person name="Mizuno M."/>
            <person name="Moestl D."/>
            <person name="Nakai S."/>
            <person name="Noback M."/>
            <person name="Noone D."/>
            <person name="O'Reilly M."/>
            <person name="Ogawa K."/>
            <person name="Ogiwara A."/>
            <person name="Oudega B."/>
            <person name="Park S.-H."/>
            <person name="Parro V."/>
            <person name="Pohl T.M."/>
            <person name="Portetelle D."/>
            <person name="Porwollik S."/>
            <person name="Prescott A.M."/>
            <person name="Presecan E."/>
            <person name="Pujic P."/>
            <person name="Purnelle B."/>
            <person name="Rapoport G."/>
            <person name="Rey M."/>
            <person name="Reynolds S."/>
            <person name="Rieger M."/>
            <person name="Rivolta C."/>
            <person name="Rocha E."/>
            <person name="Roche B."/>
            <person name="Rose M."/>
            <person name="Sadaie Y."/>
            <person name="Sato T."/>
            <person name="Scanlan E."/>
            <person name="Schleich S."/>
            <person name="Schroeter R."/>
            <person name="Scoffone F."/>
            <person name="Sekiguchi J."/>
            <person name="Sekowska A."/>
            <person name="Seror S.J."/>
            <person name="Serror P."/>
            <person name="Shin B.-S."/>
            <person name="Soldo B."/>
            <person name="Sorokin A."/>
            <person name="Tacconi E."/>
            <person name="Takagi T."/>
            <person name="Takahashi H."/>
            <person name="Takemaru K."/>
            <person name="Takeuchi M."/>
            <person name="Tamakoshi A."/>
            <person name="Tanaka T."/>
            <person name="Terpstra P."/>
            <person name="Tognoni A."/>
            <person name="Tosato V."/>
            <person name="Uchiyama S."/>
            <person name="Vandenbol M."/>
            <person name="Vannier F."/>
            <person name="Vassarotti A."/>
            <person name="Viari A."/>
            <person name="Wambutt R."/>
            <person name="Wedler E."/>
            <person name="Wedler H."/>
            <person name="Weitzenegger T."/>
            <person name="Winters P."/>
            <person name="Wipat A."/>
            <person name="Yamamoto H."/>
            <person name="Yamane K."/>
            <person name="Yasumoto K."/>
            <person name="Yata K."/>
            <person name="Yoshida K."/>
            <person name="Yoshikawa H.-F."/>
            <person name="Zumstein E."/>
            <person name="Yoshikawa H."/>
            <person name="Danchin A."/>
        </authorList>
    </citation>
    <scope>NUCLEOTIDE SEQUENCE [LARGE SCALE GENOMIC DNA]</scope>
    <source>
        <strain>168</strain>
    </source>
</reference>
<reference key="5">
    <citation type="journal article" date="1994" name="Antonie Van Leeuwenhoek">
        <title>Characterization of production and enzyme properties of an endo-beta-1,4-glucanase from Bacillus subtilis CK-2 isolated from compost soil.</title>
        <authorList>
            <person name="Aa K."/>
            <person name="Flengsrud R."/>
            <person name="Lindahl V."/>
            <person name="Tronsmo A."/>
        </authorList>
    </citation>
    <scope>PROTEIN SEQUENCE OF 30-45</scope>
    <source>
        <strain>CK-2</strain>
    </source>
</reference>
<name>GUN2_BACSU</name>
<proteinExistence type="evidence at protein level"/>
<gene>
    <name type="primary">eglS</name>
    <name type="synonym">bglC</name>
    <name type="synonym">gld</name>
    <name type="ordered locus">BSU18130</name>
</gene>
<dbReference type="EC" id="3.2.1.4"/>
<dbReference type="EMBL" id="Z29076">
    <property type="protein sequence ID" value="CAA82317.1"/>
    <property type="molecule type" value="Genomic_DNA"/>
</dbReference>
<dbReference type="EMBL" id="X04689">
    <property type="protein sequence ID" value="CAA28392.1"/>
    <property type="molecule type" value="Genomic_DNA"/>
</dbReference>
<dbReference type="EMBL" id="X67044">
    <property type="protein sequence ID" value="CAA47429.1"/>
    <property type="molecule type" value="Genomic_DNA"/>
</dbReference>
<dbReference type="EMBL" id="Z73234">
    <property type="protein sequence ID" value="CAA97610.1"/>
    <property type="status" value="ALT_INIT"/>
    <property type="molecule type" value="Genomic_DNA"/>
</dbReference>
<dbReference type="EMBL" id="AL009126">
    <property type="protein sequence ID" value="CAB13696.2"/>
    <property type="molecule type" value="Genomic_DNA"/>
</dbReference>
<dbReference type="PIR" id="G69593">
    <property type="entry name" value="G69593"/>
</dbReference>
<dbReference type="RefSeq" id="NP_389695.2">
    <property type="nucleotide sequence ID" value="NC_000964.3"/>
</dbReference>
<dbReference type="RefSeq" id="WP_003231540.1">
    <property type="nucleotide sequence ID" value="NZ_OZ025638.1"/>
</dbReference>
<dbReference type="PDB" id="2L8A">
    <property type="method" value="NMR"/>
    <property type="chains" value="A=354-499"/>
</dbReference>
<dbReference type="PDB" id="3PZT">
    <property type="method" value="X-ray"/>
    <property type="resolution" value="1.97 A"/>
    <property type="chains" value="A/B=27-332"/>
</dbReference>
<dbReference type="PDB" id="3PZU">
    <property type="method" value="X-ray"/>
    <property type="resolution" value="2.10 A"/>
    <property type="chains" value="A/B=27-332"/>
</dbReference>
<dbReference type="PDB" id="3PZV">
    <property type="method" value="X-ray"/>
    <property type="resolution" value="2.87 A"/>
    <property type="chains" value="A/B/C/D=27-332"/>
</dbReference>
<dbReference type="PDB" id="6UFV">
    <property type="method" value="X-ray"/>
    <property type="resolution" value="1.06 A"/>
    <property type="chains" value="A=354-499"/>
</dbReference>
<dbReference type="PDB" id="6UFW">
    <property type="method" value="X-ray"/>
    <property type="resolution" value="1.28 A"/>
    <property type="chains" value="A=354-499"/>
</dbReference>
<dbReference type="PDBsum" id="2L8A"/>
<dbReference type="PDBsum" id="3PZT"/>
<dbReference type="PDBsum" id="3PZU"/>
<dbReference type="PDBsum" id="3PZV"/>
<dbReference type="PDBsum" id="6UFV"/>
<dbReference type="PDBsum" id="6UFW"/>
<dbReference type="BMRB" id="P10475"/>
<dbReference type="SMR" id="P10475"/>
<dbReference type="FunCoup" id="P10475">
    <property type="interactions" value="176"/>
</dbReference>
<dbReference type="STRING" id="224308.BSU18130"/>
<dbReference type="CAZy" id="CBM3">
    <property type="family name" value="Carbohydrate-Binding Module Family 3"/>
</dbReference>
<dbReference type="CAZy" id="GH5">
    <property type="family name" value="Glycoside Hydrolase Family 5"/>
</dbReference>
<dbReference type="PaxDb" id="224308-BSU18130"/>
<dbReference type="EnsemblBacteria" id="CAB13696">
    <property type="protein sequence ID" value="CAB13696"/>
    <property type="gene ID" value="BSU_18130"/>
</dbReference>
<dbReference type="GeneID" id="938607"/>
<dbReference type="KEGG" id="bsu:BSU18130"/>
<dbReference type="PATRIC" id="fig|224308.179.peg.1977"/>
<dbReference type="eggNOG" id="COG2730">
    <property type="taxonomic scope" value="Bacteria"/>
</dbReference>
<dbReference type="InParanoid" id="P10475"/>
<dbReference type="OrthoDB" id="154460at2"/>
<dbReference type="BioCyc" id="BSUB:BSU18130-MONOMER"/>
<dbReference type="BRENDA" id="3.2.1.4">
    <property type="organism ID" value="658"/>
</dbReference>
<dbReference type="EvolutionaryTrace" id="P10475"/>
<dbReference type="Proteomes" id="UP000001570">
    <property type="component" value="Chromosome"/>
</dbReference>
<dbReference type="GO" id="GO:0008810">
    <property type="term" value="F:cellulase activity"/>
    <property type="evidence" value="ECO:0007669"/>
    <property type="project" value="UniProtKB-EC"/>
</dbReference>
<dbReference type="GO" id="GO:0030248">
    <property type="term" value="F:cellulose binding"/>
    <property type="evidence" value="ECO:0007669"/>
    <property type="project" value="InterPro"/>
</dbReference>
<dbReference type="GO" id="GO:0004338">
    <property type="term" value="F:glucan exo-1,3-beta-glucosidase activity"/>
    <property type="evidence" value="ECO:0000318"/>
    <property type="project" value="GO_Central"/>
</dbReference>
<dbReference type="GO" id="GO:0030245">
    <property type="term" value="P:cellulose catabolic process"/>
    <property type="evidence" value="ECO:0007669"/>
    <property type="project" value="UniProtKB-KW"/>
</dbReference>
<dbReference type="GO" id="GO:0009251">
    <property type="term" value="P:glucan catabolic process"/>
    <property type="evidence" value="ECO:0000318"/>
    <property type="project" value="GO_Central"/>
</dbReference>
<dbReference type="Gene3D" id="2.60.40.710">
    <property type="entry name" value="Endoglucanase-like"/>
    <property type="match status" value="1"/>
</dbReference>
<dbReference type="Gene3D" id="3.20.20.80">
    <property type="entry name" value="Glycosidases"/>
    <property type="match status" value="1"/>
</dbReference>
<dbReference type="InterPro" id="IPR008965">
    <property type="entry name" value="CBM2/CBM3_carb-bd_dom_sf"/>
</dbReference>
<dbReference type="InterPro" id="IPR001956">
    <property type="entry name" value="CBM3"/>
</dbReference>
<dbReference type="InterPro" id="IPR036966">
    <property type="entry name" value="CBM3_sf"/>
</dbReference>
<dbReference type="InterPro" id="IPR001547">
    <property type="entry name" value="Glyco_hydro_5"/>
</dbReference>
<dbReference type="InterPro" id="IPR018087">
    <property type="entry name" value="Glyco_hydro_5_CS"/>
</dbReference>
<dbReference type="InterPro" id="IPR017853">
    <property type="entry name" value="Glycoside_hydrolase_SF"/>
</dbReference>
<dbReference type="PANTHER" id="PTHR34142">
    <property type="entry name" value="ENDO-BETA-1,4-GLUCANASE A"/>
    <property type="match status" value="1"/>
</dbReference>
<dbReference type="PANTHER" id="PTHR34142:SF1">
    <property type="entry name" value="GLYCOSIDE HYDROLASE FAMILY 5 DOMAIN-CONTAINING PROTEIN"/>
    <property type="match status" value="1"/>
</dbReference>
<dbReference type="Pfam" id="PF00942">
    <property type="entry name" value="CBM_3"/>
    <property type="match status" value="1"/>
</dbReference>
<dbReference type="Pfam" id="PF00150">
    <property type="entry name" value="Cellulase"/>
    <property type="match status" value="1"/>
</dbReference>
<dbReference type="SMART" id="SM01067">
    <property type="entry name" value="CBM_3"/>
    <property type="match status" value="1"/>
</dbReference>
<dbReference type="SUPFAM" id="SSF51445">
    <property type="entry name" value="(Trans)glycosidases"/>
    <property type="match status" value="1"/>
</dbReference>
<dbReference type="SUPFAM" id="SSF49384">
    <property type="entry name" value="Carbohydrate-binding domain"/>
    <property type="match status" value="1"/>
</dbReference>
<dbReference type="PROSITE" id="PS51172">
    <property type="entry name" value="CBM3"/>
    <property type="match status" value="1"/>
</dbReference>
<dbReference type="PROSITE" id="PS00659">
    <property type="entry name" value="GLYCOSYL_HYDROL_F5"/>
    <property type="match status" value="1"/>
</dbReference>
<sequence length="499" mass="55287">MKRSISIFITCLLITLLTMGGMIASPASAAGTKTPVAKNGQLSIKGTQLVNRDGKAVQLKGISSHGLQWYGEYVNKDSLKWLRDDWGITVFRAAMYTADGGYIDNPSVKNKVKEAVEAAKELGIYVIIDWHILNDGNPNQNKEKAKEFFKEMSSLYGNTPNVIYEIANEPNGDVNWKRDIKPYAEEVISVIRKNDPDNIIIVGTGTWSQDVNDAADDQLKDANVMYALHFYAGTHGQFLRDKANYALSKGAPIFVTEWGTSDASGNGGVFLDQSREWLKYLDSKTISWVNWNLSDKQESSSALKPGASKTGGWRLSDLSASGTFVRENILGTKDSTKDIPETPSKDKPTQENGISVQYRAGDGSMNSNQIRPQLQIKNNGNTTVDLKDVTARYWYKAKNKGQNFDCDYAQIGCGNVTHKFVTLHKPKQGADTYLELGFKNGTLAPGASTGNIQLRLHNDDWSNYAQSGDYSFFKSNTFKTTKKITLYDQGKLIWGTEPN</sequence>
<protein>
    <recommendedName>
        <fullName>Endoglucanase</fullName>
        <ecNumber>3.2.1.4</ecNumber>
    </recommendedName>
    <alternativeName>
        <fullName>Carboxymethyl-cellulase</fullName>
        <shortName>CMCase</shortName>
        <shortName>Cellulase</shortName>
    </alternativeName>
    <alternativeName>
        <fullName>Endo-1,4-beta-glucanase</fullName>
    </alternativeName>
</protein>
<keyword id="KW-0002">3D-structure</keyword>
<keyword id="KW-0119">Carbohydrate metabolism</keyword>
<keyword id="KW-0136">Cellulose degradation</keyword>
<keyword id="KW-0903">Direct protein sequencing</keyword>
<keyword id="KW-0326">Glycosidase</keyword>
<keyword id="KW-0378">Hydrolase</keyword>
<keyword id="KW-0624">Polysaccharide degradation</keyword>
<keyword id="KW-1185">Reference proteome</keyword>
<keyword id="KW-0732">Signal</keyword>
<accession>P10475</accession>
<evidence type="ECO:0000250" key="1">
    <source>
        <dbReference type="UniProtKB" id="O85465"/>
    </source>
</evidence>
<evidence type="ECO:0000255" key="2">
    <source>
        <dbReference type="PROSITE-ProRule" id="PRU00513"/>
    </source>
</evidence>
<evidence type="ECO:0000269" key="3">
    <source>
    </source>
</evidence>
<evidence type="ECO:0000305" key="4"/>
<evidence type="ECO:0007829" key="5">
    <source>
        <dbReference type="PDB" id="2L8A"/>
    </source>
</evidence>
<evidence type="ECO:0007829" key="6">
    <source>
        <dbReference type="PDB" id="3PZT"/>
    </source>
</evidence>
<evidence type="ECO:0007829" key="7">
    <source>
        <dbReference type="PDB" id="3PZU"/>
    </source>
</evidence>
<evidence type="ECO:0007829" key="8">
    <source>
        <dbReference type="PDB" id="6UFV"/>
    </source>
</evidence>
<feature type="signal peptide" evidence="3">
    <location>
        <begin position="1"/>
        <end position="29"/>
    </location>
</feature>
<feature type="chain" id="PRO_0000007840" description="Endoglucanase">
    <location>
        <begin position="30"/>
        <end position="499"/>
    </location>
</feature>
<feature type="domain" description="CBM3" evidence="2">
    <location>
        <begin position="350"/>
        <end position="499"/>
    </location>
</feature>
<feature type="active site" description="Proton donor" evidence="1">
    <location>
        <position position="169"/>
    </location>
</feature>
<feature type="active site" description="Nucleophile" evidence="1">
    <location>
        <position position="257"/>
    </location>
</feature>
<feature type="binding site" evidence="1">
    <location>
        <position position="65"/>
    </location>
    <ligand>
        <name>substrate</name>
    </ligand>
</feature>
<feature type="binding site" evidence="1">
    <location>
        <begin position="69"/>
        <end position="70"/>
    </location>
    <ligand>
        <name>substrate</name>
    </ligand>
</feature>
<feature type="binding site" evidence="1">
    <location>
        <position position="96"/>
    </location>
    <ligand>
        <name>substrate</name>
    </ligand>
</feature>
<feature type="binding site" evidence="1">
    <location>
        <position position="131"/>
    </location>
    <ligand>
        <name>substrate</name>
    </ligand>
</feature>
<feature type="binding site" evidence="1">
    <location>
        <position position="231"/>
    </location>
    <ligand>
        <name>substrate</name>
    </ligand>
</feature>
<feature type="binding site" evidence="1">
    <location>
        <begin position="263"/>
        <end position="264"/>
    </location>
    <ligand>
        <name>substrate</name>
    </ligand>
</feature>
<feature type="binding site" evidence="1">
    <location>
        <position position="291"/>
    </location>
    <ligand>
        <name>substrate</name>
    </ligand>
</feature>
<feature type="binding site" evidence="1">
    <location>
        <begin position="296"/>
        <end position="298"/>
    </location>
    <ligand>
        <name>substrate</name>
    </ligand>
</feature>
<feature type="sequence conflict" description="In Ref. 2; CAA47429." evidence="4" ref="2">
    <original>S</original>
    <variation>N</variation>
    <location>
        <position position="283"/>
    </location>
</feature>
<feature type="helix" evidence="7">
    <location>
        <begin position="36"/>
        <end position="39"/>
    </location>
</feature>
<feature type="strand" evidence="6">
    <location>
        <begin position="43"/>
        <end position="45"/>
    </location>
</feature>
<feature type="strand" evidence="6">
    <location>
        <begin position="48"/>
        <end position="50"/>
    </location>
</feature>
<feature type="strand" evidence="6">
    <location>
        <begin position="60"/>
        <end position="65"/>
    </location>
</feature>
<feature type="helix" evidence="6">
    <location>
        <begin position="67"/>
        <end position="70"/>
    </location>
</feature>
<feature type="helix" evidence="6">
    <location>
        <begin position="71"/>
        <end position="73"/>
    </location>
</feature>
<feature type="helix" evidence="6">
    <location>
        <begin position="76"/>
        <end position="85"/>
    </location>
</feature>
<feature type="strand" evidence="6">
    <location>
        <begin position="89"/>
        <end position="98"/>
    </location>
</feature>
<feature type="turn" evidence="6">
    <location>
        <begin position="102"/>
        <end position="104"/>
    </location>
</feature>
<feature type="helix" evidence="6">
    <location>
        <begin position="106"/>
        <end position="108"/>
    </location>
</feature>
<feature type="helix" evidence="6">
    <location>
        <begin position="109"/>
        <end position="122"/>
    </location>
</feature>
<feature type="strand" evidence="6">
    <location>
        <begin position="125"/>
        <end position="131"/>
    </location>
</feature>
<feature type="strand" evidence="6">
    <location>
        <begin position="133"/>
        <end position="135"/>
    </location>
</feature>
<feature type="turn" evidence="6">
    <location>
        <begin position="138"/>
        <end position="141"/>
    </location>
</feature>
<feature type="helix" evidence="6">
    <location>
        <begin position="142"/>
        <end position="156"/>
    </location>
</feature>
<feature type="strand" evidence="6">
    <location>
        <begin position="162"/>
        <end position="165"/>
    </location>
</feature>
<feature type="turn" evidence="6">
    <location>
        <begin position="176"/>
        <end position="179"/>
    </location>
</feature>
<feature type="helix" evidence="6">
    <location>
        <begin position="180"/>
        <end position="194"/>
    </location>
</feature>
<feature type="strand" evidence="6">
    <location>
        <begin position="196"/>
        <end position="198"/>
    </location>
</feature>
<feature type="strand" evidence="6">
    <location>
        <begin position="200"/>
        <end position="202"/>
    </location>
</feature>
<feature type="helix" evidence="6">
    <location>
        <begin position="205"/>
        <end position="208"/>
    </location>
</feature>
<feature type="helix" evidence="6">
    <location>
        <begin position="211"/>
        <end position="215"/>
    </location>
</feature>
<feature type="strand" evidence="6">
    <location>
        <begin position="224"/>
        <end position="231"/>
    </location>
</feature>
<feature type="turn" evidence="6">
    <location>
        <begin position="232"/>
        <end position="234"/>
    </location>
</feature>
<feature type="helix" evidence="6">
    <location>
        <begin position="237"/>
        <end position="248"/>
    </location>
</feature>
<feature type="strand" evidence="6">
    <location>
        <begin position="253"/>
        <end position="261"/>
    </location>
</feature>
<feature type="helix" evidence="6">
    <location>
        <begin position="271"/>
        <end position="283"/>
    </location>
</feature>
<feature type="strand" evidence="6">
    <location>
        <begin position="288"/>
        <end position="294"/>
    </location>
</feature>
<feature type="helix" evidence="6">
    <location>
        <begin position="315"/>
        <end position="317"/>
    </location>
</feature>
<feature type="helix" evidence="6">
    <location>
        <begin position="320"/>
        <end position="330"/>
    </location>
</feature>
<feature type="strand" evidence="8">
    <location>
        <begin position="354"/>
        <end position="360"/>
    </location>
</feature>
<feature type="strand" evidence="8">
    <location>
        <begin position="372"/>
        <end position="378"/>
    </location>
</feature>
<feature type="strand" evidence="8">
    <location>
        <begin position="380"/>
        <end position="382"/>
    </location>
</feature>
<feature type="helix" evidence="8">
    <location>
        <begin position="386"/>
        <end position="388"/>
    </location>
</feature>
<feature type="strand" evidence="8">
    <location>
        <begin position="389"/>
        <end position="395"/>
    </location>
</feature>
<feature type="strand" evidence="8">
    <location>
        <begin position="402"/>
        <end position="409"/>
    </location>
</feature>
<feature type="helix" evidence="8">
    <location>
        <begin position="413"/>
        <end position="415"/>
    </location>
</feature>
<feature type="strand" evidence="8">
    <location>
        <begin position="416"/>
        <end position="427"/>
    </location>
</feature>
<feature type="strand" evidence="8">
    <location>
        <begin position="430"/>
        <end position="440"/>
    </location>
</feature>
<feature type="strand" evidence="5">
    <location>
        <begin position="447"/>
        <end position="450"/>
    </location>
</feature>
<feature type="strand" evidence="8">
    <location>
        <begin position="452"/>
        <end position="458"/>
    </location>
</feature>
<feature type="helix" evidence="8">
    <location>
        <begin position="466"/>
        <end position="468"/>
    </location>
</feature>
<feature type="strand" evidence="8">
    <location>
        <begin position="482"/>
        <end position="488"/>
    </location>
</feature>
<feature type="strand" evidence="8">
    <location>
        <begin position="491"/>
        <end position="495"/>
    </location>
</feature>
<comment type="catalytic activity">
    <reaction>
        <text>Endohydrolysis of (1-&gt;4)-beta-D-glucosidic linkages in cellulose, lichenin and cereal beta-D-glucans.</text>
        <dbReference type="EC" id="3.2.1.4"/>
    </reaction>
</comment>
<comment type="similarity">
    <text evidence="4">Belongs to the glycosyl hydrolase 5 (cellulase A) family.</text>
</comment>
<comment type="sequence caution" evidence="4">
    <conflict type="erroneous initiation">
        <sequence resource="EMBL-CDS" id="CAA97610"/>
    </conflict>
</comment>